<keyword id="KW-0167">Capsid protein</keyword>
<keyword id="KW-1140">T=1 icosahedral capsid protein</keyword>
<keyword id="KW-1171">Viral genome ejection through host cell envelope</keyword>
<keyword id="KW-1162">Viral penetration into host cytoplasm</keyword>
<keyword id="KW-0946">Virion</keyword>
<keyword id="KW-1160">Virus entry into host cell</keyword>
<name>CAPSD_BPPHK</name>
<comment type="function">
    <text evidence="1">Assembles to form an icosahedral capsid with a T=1 symmetry, about 30 nm in diameter, and consisting of 60 capsid proteins F. Upon virus binding to host cell, one of the spikes dissociates from the capsid and the virus interacts with LPS through the exposed EF loops on the F proteins. After the genome had been ejected, the channel formed by the F proteins at the unique fivefold axis remains open.</text>
</comment>
<comment type="subunit">
    <text evidence="1">Pentamerizes and interacts with H protein, G and B pentamers to form 12S pre-assembly complex. By binding with protein D, induces joining of twelve 12S complex to form the procapsid. The procapsid has an external scaffold made of 240 copies of protein D, 60 copies of the internally located B protein, and contains 60 copies of each of the viral structural proteins F and G. Upon genome packaging, interacts with protein J. The mature virion is composed of 60 copies each of the F, G, and J proteins, and 12 copies of the H protein.</text>
</comment>
<comment type="subcellular location">
    <subcellularLocation>
        <location evidence="1">Virion</location>
    </subcellularLocation>
</comment>
<comment type="miscellaneous">
    <text>Phi KhT, a host-range mutant of phi K, can grow on E.coli C and B, besides K12, and is more thermosensitive than the parental phage phi K.</text>
</comment>
<comment type="similarity">
    <text evidence="2">Belongs to the microviridae F protein family.</text>
</comment>
<proteinExistence type="inferred from homology"/>
<gene>
    <name type="primary">F</name>
</gene>
<reference key="1">
    <citation type="journal article" date="1996" name="J. Biochem.">
        <title>The virion proteins encoded by bacteriophage phi K and its host-range mutant phi KhT: host-range determination and DNA binding properties.</title>
        <authorList>
            <person name="Kodaira K."/>
            <person name="Oki M."/>
            <person name="Kakikawa M."/>
            <person name="Kimoto H."/>
            <person name="Taketo A."/>
        </authorList>
    </citation>
    <scope>NUCLEOTIDE SEQUENCE [GENOMIC DNA] (PHI-K AND MUTANT PHI KHT)</scope>
</reference>
<sequence length="431" mass="49239">MSNVQTSAEREIVDLSHLAFDCGMIGRLKTVSWTPVIAGDSFELDAVGALRLSPLRRGLAIDSKVDFFTFYIPHRHVYGDQWIQFMRDGVDASPLPSVTTTKYPDDAGYVGTIVPKSNRIPKFLHQSYLNIYNNYFRAPWMPERTEANPSNLDRDDSRYGFRCCHLKTIWSAPLPPETKLAEQMGIESNSIDIMGLQAAYAQLHTEQERTYFMQRYRDVISSFGGSTSYDADNRPLLVMHTDFWASGYDVDGTDQSSLGQFSGRVQQTFKHSVPRFFVPEHGVMMTLMLVRFPPISPLEHHYLVGRNNLTYTDLAGDPALIGNLPPREISYQDLFRDGRPGIKIKVAESIWYRTHPDYVNYKYQLLEGFPFLDDAPGTTSGDDLQKAILIDHNDYNACFQSQQLLQWNNQARYNVNVYRHIPTVRDSIMTS</sequence>
<feature type="initiator methionine" description="Removed; by host" evidence="1">
    <location>
        <position position="1"/>
    </location>
</feature>
<feature type="chain" id="PRO_0000164889" description="Capsid protein F">
    <location>
        <begin position="2"/>
        <end position="431"/>
    </location>
</feature>
<evidence type="ECO:0000250" key="1">
    <source>
        <dbReference type="UniProtKB" id="P03641"/>
    </source>
</evidence>
<evidence type="ECO:0000305" key="2"/>
<protein>
    <recommendedName>
        <fullName>Capsid protein F</fullName>
    </recommendedName>
    <alternativeName>
        <fullName>F protein</fullName>
    </alternativeName>
    <alternativeName>
        <fullName>GPF</fullName>
    </alternativeName>
</protein>
<dbReference type="EMBL" id="X60323">
    <property type="protein sequence ID" value="CAA42891.1"/>
    <property type="molecule type" value="Genomic_DNA"/>
</dbReference>
<dbReference type="PIR" id="JC4805">
    <property type="entry name" value="JC4805"/>
</dbReference>
<dbReference type="RefSeq" id="NP_043949.1">
    <property type="nucleotide sequence ID" value="NC_001730.1"/>
</dbReference>
<dbReference type="SMR" id="Q38041"/>
<dbReference type="GeneID" id="1261199"/>
<dbReference type="KEGG" id="vg:1261199"/>
<dbReference type="Proteomes" id="UP000002122">
    <property type="component" value="Segment"/>
</dbReference>
<dbReference type="GO" id="GO:0039615">
    <property type="term" value="C:T=1 icosahedral viral capsid"/>
    <property type="evidence" value="ECO:0007669"/>
    <property type="project" value="UniProtKB-KW"/>
</dbReference>
<dbReference type="GO" id="GO:0005198">
    <property type="term" value="F:structural molecule activity"/>
    <property type="evidence" value="ECO:0007669"/>
    <property type="project" value="InterPro"/>
</dbReference>
<dbReference type="GO" id="GO:0046718">
    <property type="term" value="P:symbiont entry into host cell"/>
    <property type="evidence" value="ECO:0007669"/>
    <property type="project" value="UniProtKB-KW"/>
</dbReference>
<dbReference type="Gene3D" id="2.60.169.10">
    <property type="entry name" value="Microviridae F protein"/>
    <property type="match status" value="1"/>
</dbReference>
<dbReference type="InterPro" id="IPR016184">
    <property type="entry name" value="Capsid/spike_ssDNA_virus"/>
</dbReference>
<dbReference type="InterPro" id="IPR003514">
    <property type="entry name" value="Microviridae_protein_F"/>
</dbReference>
<dbReference type="InterPro" id="IPR037002">
    <property type="entry name" value="Microviridae_protein_F_sf"/>
</dbReference>
<dbReference type="Pfam" id="PF02305">
    <property type="entry name" value="Phage_F"/>
    <property type="match status" value="2"/>
</dbReference>
<dbReference type="SUPFAM" id="SSF88645">
    <property type="entry name" value="ssDNA viruses"/>
    <property type="match status" value="1"/>
</dbReference>
<organism>
    <name type="scientific">Enterobacteria phage phiK</name>
    <name type="common">Bacteriophage phi-K</name>
    <dbReference type="NCBI Taxonomy" id="10848"/>
    <lineage>
        <taxon>Viruses</taxon>
        <taxon>Monodnaviria</taxon>
        <taxon>Sangervirae</taxon>
        <taxon>Phixviricota</taxon>
        <taxon>Malgrandaviricetes</taxon>
        <taxon>Petitvirales</taxon>
        <taxon>Microviridae</taxon>
        <taxon>Bullavirinae</taxon>
        <taxon>Alphatrevirus</taxon>
    </lineage>
</organism>
<organismHost>
    <name type="scientific">Escherichia coli</name>
    <dbReference type="NCBI Taxonomy" id="562"/>
</organismHost>
<accession>Q38041</accession>